<evidence type="ECO:0000255" key="1">
    <source>
        <dbReference type="HAMAP-Rule" id="MF_01225"/>
    </source>
</evidence>
<evidence type="ECO:0000255" key="2">
    <source>
        <dbReference type="PROSITE-ProRule" id="PRU01266"/>
    </source>
</evidence>
<dbReference type="EC" id="4.1.99.22" evidence="1"/>
<dbReference type="EMBL" id="FM180568">
    <property type="protein sequence ID" value="CAS08281.1"/>
    <property type="molecule type" value="Genomic_DNA"/>
</dbReference>
<dbReference type="RefSeq" id="WP_001339847.1">
    <property type="nucleotide sequence ID" value="NC_011601.1"/>
</dbReference>
<dbReference type="SMR" id="B7ULX8"/>
<dbReference type="KEGG" id="ecg:E2348C_0733"/>
<dbReference type="HOGENOM" id="CLU_009273_0_1_6"/>
<dbReference type="UniPathway" id="UPA00344"/>
<dbReference type="Proteomes" id="UP000008205">
    <property type="component" value="Chromosome"/>
</dbReference>
<dbReference type="GO" id="GO:0051539">
    <property type="term" value="F:4 iron, 4 sulfur cluster binding"/>
    <property type="evidence" value="ECO:0007669"/>
    <property type="project" value="UniProtKB-UniRule"/>
</dbReference>
<dbReference type="GO" id="GO:0061799">
    <property type="term" value="F:cyclic pyranopterin monophosphate synthase activity"/>
    <property type="evidence" value="ECO:0007669"/>
    <property type="project" value="TreeGrafter"/>
</dbReference>
<dbReference type="GO" id="GO:0061798">
    <property type="term" value="F:GTP 3',8'-cyclase activity"/>
    <property type="evidence" value="ECO:0007669"/>
    <property type="project" value="UniProtKB-UniRule"/>
</dbReference>
<dbReference type="GO" id="GO:0005525">
    <property type="term" value="F:GTP binding"/>
    <property type="evidence" value="ECO:0007669"/>
    <property type="project" value="UniProtKB-UniRule"/>
</dbReference>
<dbReference type="GO" id="GO:0046872">
    <property type="term" value="F:metal ion binding"/>
    <property type="evidence" value="ECO:0007669"/>
    <property type="project" value="UniProtKB-KW"/>
</dbReference>
<dbReference type="GO" id="GO:1904047">
    <property type="term" value="F:S-adenosyl-L-methionine binding"/>
    <property type="evidence" value="ECO:0007669"/>
    <property type="project" value="UniProtKB-UniRule"/>
</dbReference>
<dbReference type="GO" id="GO:0006777">
    <property type="term" value="P:Mo-molybdopterin cofactor biosynthetic process"/>
    <property type="evidence" value="ECO:0007669"/>
    <property type="project" value="UniProtKB-UniRule"/>
</dbReference>
<dbReference type="CDD" id="cd01335">
    <property type="entry name" value="Radical_SAM"/>
    <property type="match status" value="1"/>
</dbReference>
<dbReference type="CDD" id="cd21117">
    <property type="entry name" value="Twitch_MoaA"/>
    <property type="match status" value="1"/>
</dbReference>
<dbReference type="FunFam" id="3.20.20.70:FF:000057">
    <property type="entry name" value="GTP 3',8-cyclase"/>
    <property type="match status" value="1"/>
</dbReference>
<dbReference type="Gene3D" id="3.20.20.70">
    <property type="entry name" value="Aldolase class I"/>
    <property type="match status" value="1"/>
</dbReference>
<dbReference type="HAMAP" id="MF_01225_B">
    <property type="entry name" value="MoaA_B"/>
    <property type="match status" value="1"/>
</dbReference>
<dbReference type="InterPro" id="IPR013785">
    <property type="entry name" value="Aldolase_TIM"/>
</dbReference>
<dbReference type="InterPro" id="IPR006638">
    <property type="entry name" value="Elp3/MiaA/NifB-like_rSAM"/>
</dbReference>
<dbReference type="InterPro" id="IPR013483">
    <property type="entry name" value="MoaA"/>
</dbReference>
<dbReference type="InterPro" id="IPR000385">
    <property type="entry name" value="MoaA_NifB_PqqE_Fe-S-bd_CS"/>
</dbReference>
<dbReference type="InterPro" id="IPR010505">
    <property type="entry name" value="MoaA_twitch"/>
</dbReference>
<dbReference type="InterPro" id="IPR050105">
    <property type="entry name" value="MoCo_biosynth_MoaA/MoaC"/>
</dbReference>
<dbReference type="InterPro" id="IPR007197">
    <property type="entry name" value="rSAM"/>
</dbReference>
<dbReference type="NCBIfam" id="TIGR02666">
    <property type="entry name" value="moaA"/>
    <property type="match status" value="1"/>
</dbReference>
<dbReference type="PANTHER" id="PTHR22960:SF28">
    <property type="entry name" value="GTP 3',8-CYCLASE"/>
    <property type="match status" value="1"/>
</dbReference>
<dbReference type="PANTHER" id="PTHR22960">
    <property type="entry name" value="MOLYBDOPTERIN COFACTOR SYNTHESIS PROTEIN A"/>
    <property type="match status" value="1"/>
</dbReference>
<dbReference type="Pfam" id="PF13353">
    <property type="entry name" value="Fer4_12"/>
    <property type="match status" value="1"/>
</dbReference>
<dbReference type="Pfam" id="PF06463">
    <property type="entry name" value="Mob_synth_C"/>
    <property type="match status" value="1"/>
</dbReference>
<dbReference type="Pfam" id="PF04055">
    <property type="entry name" value="Radical_SAM"/>
    <property type="match status" value="1"/>
</dbReference>
<dbReference type="SFLD" id="SFLDG01383">
    <property type="entry name" value="cyclic_pyranopterin_phosphate"/>
    <property type="match status" value="1"/>
</dbReference>
<dbReference type="SFLD" id="SFLDG01386">
    <property type="entry name" value="main_SPASM_domain-containing"/>
    <property type="match status" value="1"/>
</dbReference>
<dbReference type="SMART" id="SM00729">
    <property type="entry name" value="Elp3"/>
    <property type="match status" value="1"/>
</dbReference>
<dbReference type="SUPFAM" id="SSF102114">
    <property type="entry name" value="Radical SAM enzymes"/>
    <property type="match status" value="1"/>
</dbReference>
<dbReference type="PROSITE" id="PS01305">
    <property type="entry name" value="MOAA_NIFB_PQQE"/>
    <property type="match status" value="1"/>
</dbReference>
<dbReference type="PROSITE" id="PS51918">
    <property type="entry name" value="RADICAL_SAM"/>
    <property type="match status" value="1"/>
</dbReference>
<comment type="function">
    <text evidence="1">Catalyzes the cyclization of GTP to (8S)-3',8-cyclo-7,8-dihydroguanosine 5'-triphosphate.</text>
</comment>
<comment type="catalytic activity">
    <reaction evidence="1">
        <text>GTP + AH2 + S-adenosyl-L-methionine = (8S)-3',8-cyclo-7,8-dihydroguanosine 5'-triphosphate + 5'-deoxyadenosine + L-methionine + A + H(+)</text>
        <dbReference type="Rhea" id="RHEA:49576"/>
        <dbReference type="ChEBI" id="CHEBI:13193"/>
        <dbReference type="ChEBI" id="CHEBI:15378"/>
        <dbReference type="ChEBI" id="CHEBI:17319"/>
        <dbReference type="ChEBI" id="CHEBI:17499"/>
        <dbReference type="ChEBI" id="CHEBI:37565"/>
        <dbReference type="ChEBI" id="CHEBI:57844"/>
        <dbReference type="ChEBI" id="CHEBI:59789"/>
        <dbReference type="ChEBI" id="CHEBI:131766"/>
        <dbReference type="EC" id="4.1.99.22"/>
    </reaction>
</comment>
<comment type="cofactor">
    <cofactor evidence="1">
        <name>[4Fe-4S] cluster</name>
        <dbReference type="ChEBI" id="CHEBI:49883"/>
    </cofactor>
    <text evidence="1">Binds 2 [4Fe-4S] clusters. Binds 1 [4Fe-4S] cluster coordinated with 3 cysteines and an exchangeable S-adenosyl-L-methionine and 1 [4Fe-4S] cluster coordinated with 3 cysteines and the GTP-derived substrate.</text>
</comment>
<comment type="pathway">
    <text evidence="1">Cofactor biosynthesis; molybdopterin biosynthesis.</text>
</comment>
<comment type="subunit">
    <text evidence="1">Monomer and homodimer.</text>
</comment>
<comment type="similarity">
    <text evidence="1">Belongs to the radical SAM superfamily. MoaA family.</text>
</comment>
<protein>
    <recommendedName>
        <fullName evidence="1">GTP 3',8-cyclase</fullName>
        <ecNumber evidence="1">4.1.99.22</ecNumber>
    </recommendedName>
    <alternativeName>
        <fullName evidence="1">Molybdenum cofactor biosynthesis protein A</fullName>
    </alternativeName>
</protein>
<sequence length="329" mass="37346">MASQLTDAFARKFYYLRLSITDVCNFRCTYCLPDGYKPSGVTNKGFLTVDEIRRVTRAFASLGTEKVRLTGGEPSLRRDFTDIIAAVRENDAIRQIAVTTNGYRLERDVANWRDAGLTGINVSVDSLDARQFHAITGQDKFNQVMAGIDAAFEAGFEKVKVNTVLMRDVNHHQLDTFLNWIQHRPIQLRFIELMETGEGSELFRKHHISGQVLRDELLRRGWIHQLRQRSDGPAQVFCHPDYAGEIGLIMPYEKDFCTTCNRLRVSSIGKLHLCLFGEGGVNLRDLLEDDIQQQALEARISAALREKKQTHFLHQNNTGITQNLSYIGG</sequence>
<organism>
    <name type="scientific">Escherichia coli O127:H6 (strain E2348/69 / EPEC)</name>
    <dbReference type="NCBI Taxonomy" id="574521"/>
    <lineage>
        <taxon>Bacteria</taxon>
        <taxon>Pseudomonadati</taxon>
        <taxon>Pseudomonadota</taxon>
        <taxon>Gammaproteobacteria</taxon>
        <taxon>Enterobacterales</taxon>
        <taxon>Enterobacteriaceae</taxon>
        <taxon>Escherichia</taxon>
    </lineage>
</organism>
<keyword id="KW-0004">4Fe-4S</keyword>
<keyword id="KW-0342">GTP-binding</keyword>
<keyword id="KW-0408">Iron</keyword>
<keyword id="KW-0411">Iron-sulfur</keyword>
<keyword id="KW-0456">Lyase</keyword>
<keyword id="KW-0479">Metal-binding</keyword>
<keyword id="KW-0501">Molybdenum cofactor biosynthesis</keyword>
<keyword id="KW-0547">Nucleotide-binding</keyword>
<keyword id="KW-1185">Reference proteome</keyword>
<keyword id="KW-0949">S-adenosyl-L-methionine</keyword>
<feature type="chain" id="PRO_1000164914" description="GTP 3',8-cyclase">
    <location>
        <begin position="1"/>
        <end position="329"/>
    </location>
</feature>
<feature type="domain" description="Radical SAM core" evidence="2">
    <location>
        <begin position="8"/>
        <end position="234"/>
    </location>
</feature>
<feature type="binding site" evidence="1">
    <location>
        <position position="17"/>
    </location>
    <ligand>
        <name>GTP</name>
        <dbReference type="ChEBI" id="CHEBI:37565"/>
    </ligand>
</feature>
<feature type="binding site" evidence="1">
    <location>
        <position position="24"/>
    </location>
    <ligand>
        <name>[4Fe-4S] cluster</name>
        <dbReference type="ChEBI" id="CHEBI:49883"/>
        <label>1</label>
        <note>4Fe-4S-S-AdoMet</note>
    </ligand>
</feature>
<feature type="binding site" evidence="1">
    <location>
        <position position="28"/>
    </location>
    <ligand>
        <name>[4Fe-4S] cluster</name>
        <dbReference type="ChEBI" id="CHEBI:49883"/>
        <label>1</label>
        <note>4Fe-4S-S-AdoMet</note>
    </ligand>
</feature>
<feature type="binding site" evidence="1">
    <location>
        <position position="30"/>
    </location>
    <ligand>
        <name>S-adenosyl-L-methionine</name>
        <dbReference type="ChEBI" id="CHEBI:59789"/>
    </ligand>
</feature>
<feature type="binding site" evidence="1">
    <location>
        <position position="31"/>
    </location>
    <ligand>
        <name>[4Fe-4S] cluster</name>
        <dbReference type="ChEBI" id="CHEBI:49883"/>
        <label>1</label>
        <note>4Fe-4S-S-AdoMet</note>
    </ligand>
</feature>
<feature type="binding site" evidence="1">
    <location>
        <position position="68"/>
    </location>
    <ligand>
        <name>GTP</name>
        <dbReference type="ChEBI" id="CHEBI:37565"/>
    </ligand>
</feature>
<feature type="binding site" evidence="1">
    <location>
        <position position="72"/>
    </location>
    <ligand>
        <name>S-adenosyl-L-methionine</name>
        <dbReference type="ChEBI" id="CHEBI:59789"/>
    </ligand>
</feature>
<feature type="binding site" evidence="1">
    <location>
        <position position="99"/>
    </location>
    <ligand>
        <name>GTP</name>
        <dbReference type="ChEBI" id="CHEBI:37565"/>
    </ligand>
</feature>
<feature type="binding site" evidence="1">
    <location>
        <position position="123"/>
    </location>
    <ligand>
        <name>S-adenosyl-L-methionine</name>
        <dbReference type="ChEBI" id="CHEBI:59789"/>
    </ligand>
</feature>
<feature type="binding site" evidence="1">
    <location>
        <position position="160"/>
    </location>
    <ligand>
        <name>GTP</name>
        <dbReference type="ChEBI" id="CHEBI:37565"/>
    </ligand>
</feature>
<feature type="binding site" evidence="1">
    <location>
        <position position="194"/>
    </location>
    <ligand>
        <name>S-adenosyl-L-methionine</name>
        <dbReference type="ChEBI" id="CHEBI:59789"/>
    </ligand>
</feature>
<feature type="binding site" evidence="1">
    <location>
        <position position="257"/>
    </location>
    <ligand>
        <name>[4Fe-4S] cluster</name>
        <dbReference type="ChEBI" id="CHEBI:49883"/>
        <label>2</label>
        <note>4Fe-4S-substrate</note>
    </ligand>
</feature>
<feature type="binding site" evidence="1">
    <location>
        <position position="260"/>
    </location>
    <ligand>
        <name>[4Fe-4S] cluster</name>
        <dbReference type="ChEBI" id="CHEBI:49883"/>
        <label>2</label>
        <note>4Fe-4S-substrate</note>
    </ligand>
</feature>
<feature type="binding site" evidence="1">
    <location>
        <begin position="262"/>
        <end position="264"/>
    </location>
    <ligand>
        <name>GTP</name>
        <dbReference type="ChEBI" id="CHEBI:37565"/>
    </ligand>
</feature>
<feature type="binding site" evidence="1">
    <location>
        <position position="274"/>
    </location>
    <ligand>
        <name>[4Fe-4S] cluster</name>
        <dbReference type="ChEBI" id="CHEBI:49883"/>
        <label>2</label>
        <note>4Fe-4S-substrate</note>
    </ligand>
</feature>
<accession>B7ULX8</accession>
<gene>
    <name evidence="1" type="primary">moaA</name>
    <name type="ordered locus">E2348C_0733</name>
</gene>
<reference key="1">
    <citation type="journal article" date="2009" name="J. Bacteriol.">
        <title>Complete genome sequence and comparative genome analysis of enteropathogenic Escherichia coli O127:H6 strain E2348/69.</title>
        <authorList>
            <person name="Iguchi A."/>
            <person name="Thomson N.R."/>
            <person name="Ogura Y."/>
            <person name="Saunders D."/>
            <person name="Ooka T."/>
            <person name="Henderson I.R."/>
            <person name="Harris D."/>
            <person name="Asadulghani M."/>
            <person name="Kurokawa K."/>
            <person name="Dean P."/>
            <person name="Kenny B."/>
            <person name="Quail M.A."/>
            <person name="Thurston S."/>
            <person name="Dougan G."/>
            <person name="Hayashi T."/>
            <person name="Parkhill J."/>
            <person name="Frankel G."/>
        </authorList>
    </citation>
    <scope>NUCLEOTIDE SEQUENCE [LARGE SCALE GENOMIC DNA]</scope>
    <source>
        <strain>E2348/69 / EPEC</strain>
    </source>
</reference>
<name>MOAA_ECO27</name>
<proteinExistence type="inferred from homology"/>